<keyword id="KW-0143">Chaperone</keyword>
<keyword id="KW-0963">Cytoplasm</keyword>
<keyword id="KW-0996">Nickel insertion</keyword>
<sequence length="257" mass="26566">MSVRATARLRAEPDGRDGTALPVLAGEGPLALRRTRSPQAAYARVTVVGAMSAPLNGDRLAVEAEVTDGAHLTVDAAAATVALPGPRPDADPSTYGVDLTVGEGAVLHWLPEQLVSAHGSDLRMTTRVRLAPTARLLLREEQILGRHGEPTGALTTRLTVHHAGRPLLDQQLAYGPGAPGGWDGPAVLAGHRAVGQLLLADPSFGDAPLPARLLGPTAALTPLAGPAVLVTAVAADARLLRGMLDEAMRELLDTLKA</sequence>
<dbReference type="EMBL" id="AP009493">
    <property type="protein sequence ID" value="BAG23129.1"/>
    <property type="molecule type" value="Genomic_DNA"/>
</dbReference>
<dbReference type="RefSeq" id="WP_012381847.1">
    <property type="nucleotide sequence ID" value="NC_010572.1"/>
</dbReference>
<dbReference type="SMR" id="B1W5H2"/>
<dbReference type="KEGG" id="sgr:SGR_6300"/>
<dbReference type="PATRIC" id="fig|455632.4.peg.6458"/>
<dbReference type="eggNOG" id="COG0829">
    <property type="taxonomic scope" value="Bacteria"/>
</dbReference>
<dbReference type="HOGENOM" id="CLU_055097_2_0_11"/>
<dbReference type="Proteomes" id="UP000001685">
    <property type="component" value="Chromosome"/>
</dbReference>
<dbReference type="GO" id="GO:0005737">
    <property type="term" value="C:cytoplasm"/>
    <property type="evidence" value="ECO:0007669"/>
    <property type="project" value="UniProtKB-SubCell"/>
</dbReference>
<dbReference type="GO" id="GO:0016151">
    <property type="term" value="F:nickel cation binding"/>
    <property type="evidence" value="ECO:0007669"/>
    <property type="project" value="UniProtKB-UniRule"/>
</dbReference>
<dbReference type="HAMAP" id="MF_01384">
    <property type="entry name" value="UreD"/>
    <property type="match status" value="1"/>
</dbReference>
<dbReference type="InterPro" id="IPR002669">
    <property type="entry name" value="UreD"/>
</dbReference>
<dbReference type="Pfam" id="PF01774">
    <property type="entry name" value="UreD"/>
    <property type="match status" value="1"/>
</dbReference>
<organism>
    <name type="scientific">Streptomyces griseus subsp. griseus (strain JCM 4626 / CBS 651.72 / NBRC 13350 / KCC S-0626 / ISP 5235)</name>
    <dbReference type="NCBI Taxonomy" id="455632"/>
    <lineage>
        <taxon>Bacteria</taxon>
        <taxon>Bacillati</taxon>
        <taxon>Actinomycetota</taxon>
        <taxon>Actinomycetes</taxon>
        <taxon>Kitasatosporales</taxon>
        <taxon>Streptomycetaceae</taxon>
        <taxon>Streptomyces</taxon>
    </lineage>
</organism>
<gene>
    <name evidence="1" type="primary">ureD3</name>
    <name type="ordered locus">SGR_6300</name>
</gene>
<feature type="chain" id="PRO_0000346609" description="Urease accessory protein UreD 3">
    <location>
        <begin position="1"/>
        <end position="257"/>
    </location>
</feature>
<feature type="region of interest" description="Disordered" evidence="2">
    <location>
        <begin position="1"/>
        <end position="22"/>
    </location>
</feature>
<comment type="function">
    <text evidence="1">Required for maturation of urease via the functional incorporation of the urease nickel metallocenter.</text>
</comment>
<comment type="subunit">
    <text evidence="1">UreD, UreF and UreG form a complex that acts as a GTP-hydrolysis-dependent molecular chaperone, activating the urease apoprotein by helping to assemble the nickel containing metallocenter of UreC. The UreE protein probably delivers the nickel.</text>
</comment>
<comment type="subcellular location">
    <subcellularLocation>
        <location evidence="1">Cytoplasm</location>
    </subcellularLocation>
</comment>
<comment type="similarity">
    <text evidence="1">Belongs to the UreD family.</text>
</comment>
<name>URED3_STRGG</name>
<evidence type="ECO:0000255" key="1">
    <source>
        <dbReference type="HAMAP-Rule" id="MF_01384"/>
    </source>
</evidence>
<evidence type="ECO:0000256" key="2">
    <source>
        <dbReference type="SAM" id="MobiDB-lite"/>
    </source>
</evidence>
<proteinExistence type="inferred from homology"/>
<accession>B1W5H2</accession>
<protein>
    <recommendedName>
        <fullName evidence="1">Urease accessory protein UreD 3</fullName>
    </recommendedName>
</protein>
<reference key="1">
    <citation type="journal article" date="2008" name="J. Bacteriol.">
        <title>Genome sequence of the streptomycin-producing microorganism Streptomyces griseus IFO 13350.</title>
        <authorList>
            <person name="Ohnishi Y."/>
            <person name="Ishikawa J."/>
            <person name="Hara H."/>
            <person name="Suzuki H."/>
            <person name="Ikenoya M."/>
            <person name="Ikeda H."/>
            <person name="Yamashita A."/>
            <person name="Hattori M."/>
            <person name="Horinouchi S."/>
        </authorList>
    </citation>
    <scope>NUCLEOTIDE SEQUENCE [LARGE SCALE GENOMIC DNA]</scope>
    <source>
        <strain>JCM 4626 / CBS 651.72 / NBRC 13350 / KCC S-0626 / ISP 5235</strain>
    </source>
</reference>